<comment type="function">
    <text evidence="1">Methyltransferase required for the conversion of demethylmenaquinol (DMKH2) to menaquinol (MKH2).</text>
</comment>
<comment type="catalytic activity">
    <reaction evidence="1">
        <text>a 2-demethylmenaquinol + S-adenosyl-L-methionine = a menaquinol + S-adenosyl-L-homocysteine + H(+)</text>
        <dbReference type="Rhea" id="RHEA:42640"/>
        <dbReference type="Rhea" id="RHEA-COMP:9539"/>
        <dbReference type="Rhea" id="RHEA-COMP:9563"/>
        <dbReference type="ChEBI" id="CHEBI:15378"/>
        <dbReference type="ChEBI" id="CHEBI:18151"/>
        <dbReference type="ChEBI" id="CHEBI:55437"/>
        <dbReference type="ChEBI" id="CHEBI:57856"/>
        <dbReference type="ChEBI" id="CHEBI:59789"/>
        <dbReference type="EC" id="2.1.1.163"/>
    </reaction>
</comment>
<comment type="pathway">
    <text evidence="1">Quinol/quinone metabolism; menaquinone biosynthesis; menaquinol from 1,4-dihydroxy-2-naphthoate: step 2/2.</text>
</comment>
<comment type="similarity">
    <text evidence="1">Belongs to the class I-like SAM-binding methyltransferase superfamily. MenG/UbiE family.</text>
</comment>
<comment type="sequence caution" evidence="2">
    <conflict type="erroneous initiation">
        <sequence resource="EMBL-CDS" id="AAK44807"/>
    </conflict>
</comment>
<dbReference type="EC" id="2.1.1.163" evidence="1"/>
<dbReference type="EMBL" id="AE000516">
    <property type="protein sequence ID" value="AAK44807.1"/>
    <property type="status" value="ALT_INIT"/>
    <property type="molecule type" value="Genomic_DNA"/>
</dbReference>
<dbReference type="PIR" id="A70549">
    <property type="entry name" value="A70549"/>
</dbReference>
<dbReference type="RefSeq" id="WP_003402936.1">
    <property type="nucleotide sequence ID" value="NZ_KK341227.1"/>
</dbReference>
<dbReference type="SMR" id="P9WFR2"/>
<dbReference type="KEGG" id="mtc:MT0584"/>
<dbReference type="PATRIC" id="fig|83331.31.peg.615"/>
<dbReference type="HOGENOM" id="CLU_037990_0_0_11"/>
<dbReference type="UniPathway" id="UPA00079">
    <property type="reaction ID" value="UER00169"/>
</dbReference>
<dbReference type="Proteomes" id="UP000001020">
    <property type="component" value="Chromosome"/>
</dbReference>
<dbReference type="GO" id="GO:0043770">
    <property type="term" value="F:demethylmenaquinone methyltransferase activity"/>
    <property type="evidence" value="ECO:0007669"/>
    <property type="project" value="UniProtKB-UniRule"/>
</dbReference>
<dbReference type="GO" id="GO:0009234">
    <property type="term" value="P:menaquinone biosynthetic process"/>
    <property type="evidence" value="ECO:0007669"/>
    <property type="project" value="UniProtKB-UniRule"/>
</dbReference>
<dbReference type="GO" id="GO:0032259">
    <property type="term" value="P:methylation"/>
    <property type="evidence" value="ECO:0007669"/>
    <property type="project" value="UniProtKB-KW"/>
</dbReference>
<dbReference type="CDD" id="cd02440">
    <property type="entry name" value="AdoMet_MTases"/>
    <property type="match status" value="1"/>
</dbReference>
<dbReference type="FunFam" id="3.40.50.150:FF:000373">
    <property type="entry name" value="Demethylmenaquinone methyltransferase"/>
    <property type="match status" value="1"/>
</dbReference>
<dbReference type="Gene3D" id="3.40.50.150">
    <property type="entry name" value="Vaccinia Virus protein VP39"/>
    <property type="match status" value="1"/>
</dbReference>
<dbReference type="HAMAP" id="MF_01813">
    <property type="entry name" value="MenG_UbiE_methyltr"/>
    <property type="match status" value="1"/>
</dbReference>
<dbReference type="InterPro" id="IPR029063">
    <property type="entry name" value="SAM-dependent_MTases_sf"/>
</dbReference>
<dbReference type="InterPro" id="IPR004033">
    <property type="entry name" value="UbiE/COQ5_MeTrFase"/>
</dbReference>
<dbReference type="InterPro" id="IPR023576">
    <property type="entry name" value="UbiE/COQ5_MeTrFase_CS"/>
</dbReference>
<dbReference type="NCBIfam" id="TIGR01934">
    <property type="entry name" value="MenG_MenH_UbiE"/>
    <property type="match status" value="1"/>
</dbReference>
<dbReference type="NCBIfam" id="NF001241">
    <property type="entry name" value="PRK00216.1-2"/>
    <property type="match status" value="1"/>
</dbReference>
<dbReference type="PANTHER" id="PTHR43591:SF24">
    <property type="entry name" value="2-METHOXY-6-POLYPRENYL-1,4-BENZOQUINOL METHYLASE, MITOCHONDRIAL"/>
    <property type="match status" value="1"/>
</dbReference>
<dbReference type="PANTHER" id="PTHR43591">
    <property type="entry name" value="METHYLTRANSFERASE"/>
    <property type="match status" value="1"/>
</dbReference>
<dbReference type="Pfam" id="PF01209">
    <property type="entry name" value="Ubie_methyltran"/>
    <property type="match status" value="1"/>
</dbReference>
<dbReference type="SUPFAM" id="SSF53335">
    <property type="entry name" value="S-adenosyl-L-methionine-dependent methyltransferases"/>
    <property type="match status" value="1"/>
</dbReference>
<dbReference type="PROSITE" id="PS51608">
    <property type="entry name" value="SAM_MT_UBIE"/>
    <property type="match status" value="1"/>
</dbReference>
<dbReference type="PROSITE" id="PS01183">
    <property type="entry name" value="UBIE_1"/>
    <property type="match status" value="1"/>
</dbReference>
<dbReference type="PROSITE" id="PS01184">
    <property type="entry name" value="UBIE_2"/>
    <property type="match status" value="1"/>
</dbReference>
<sequence length="234" mass="25299">MSRAALDKDPRDVASMFDGVARKYDLTNTVLSLGQDRYWRRATRSALRIGPGQKVLDLAAGTAVSTVELTKSGAWCVAADFSVGMLAAGAARKVPKVAGDATRLPFGDDVFDAVTISFGLRNVANQQAALREMARVTRPGGRLLVCEFSTPTNALFATAYKEYLMRALPRVARAVSSNPEAYEYLAESIRAWPDQAVLAHQISRAGWSGVRWRNLTGGIVALHAGYKPGKQTPQ</sequence>
<proteinExistence type="inferred from homology"/>
<accession>P9WFR2</accession>
<accession>L0T453</accession>
<accession>O06424</accession>
<accession>P0A638</accession>
<reference key="1">
    <citation type="journal article" date="2002" name="J. Bacteriol.">
        <title>Whole-genome comparison of Mycobacterium tuberculosis clinical and laboratory strains.</title>
        <authorList>
            <person name="Fleischmann R.D."/>
            <person name="Alland D."/>
            <person name="Eisen J.A."/>
            <person name="Carpenter L."/>
            <person name="White O."/>
            <person name="Peterson J.D."/>
            <person name="DeBoy R.T."/>
            <person name="Dodson R.J."/>
            <person name="Gwinn M.L."/>
            <person name="Haft D.H."/>
            <person name="Hickey E.K."/>
            <person name="Kolonay J.F."/>
            <person name="Nelson W.C."/>
            <person name="Umayam L.A."/>
            <person name="Ermolaeva M.D."/>
            <person name="Salzberg S.L."/>
            <person name="Delcher A."/>
            <person name="Utterback T.R."/>
            <person name="Weidman J.F."/>
            <person name="Khouri H.M."/>
            <person name="Gill J."/>
            <person name="Mikula A."/>
            <person name="Bishai W."/>
            <person name="Jacobs W.R. Jr."/>
            <person name="Venter J.C."/>
            <person name="Fraser C.M."/>
        </authorList>
    </citation>
    <scope>NUCLEOTIDE SEQUENCE [LARGE SCALE GENOMIC DNA]</scope>
    <source>
        <strain>CDC 1551 / Oshkosh</strain>
    </source>
</reference>
<keyword id="KW-0474">Menaquinone biosynthesis</keyword>
<keyword id="KW-0489">Methyltransferase</keyword>
<keyword id="KW-1185">Reference proteome</keyword>
<keyword id="KW-0949">S-adenosyl-L-methionine</keyword>
<keyword id="KW-0808">Transferase</keyword>
<name>MENG_MYCTO</name>
<feature type="chain" id="PRO_0000428492" description="Demethylmenaquinone methyltransferase">
    <location>
        <begin position="1"/>
        <end position="234"/>
    </location>
</feature>
<feature type="binding site" evidence="1">
    <location>
        <position position="62"/>
    </location>
    <ligand>
        <name>S-adenosyl-L-methionine</name>
        <dbReference type="ChEBI" id="CHEBI:59789"/>
    </ligand>
</feature>
<feature type="binding site" evidence="1">
    <location>
        <position position="80"/>
    </location>
    <ligand>
        <name>S-adenosyl-L-methionine</name>
        <dbReference type="ChEBI" id="CHEBI:59789"/>
    </ligand>
</feature>
<feature type="binding site" evidence="1">
    <location>
        <begin position="100"/>
        <end position="101"/>
    </location>
    <ligand>
        <name>S-adenosyl-L-methionine</name>
        <dbReference type="ChEBI" id="CHEBI:59789"/>
    </ligand>
</feature>
<feature type="binding site" evidence="1">
    <location>
        <position position="117"/>
    </location>
    <ligand>
        <name>S-adenosyl-L-methionine</name>
        <dbReference type="ChEBI" id="CHEBI:59789"/>
    </ligand>
</feature>
<organism>
    <name type="scientific">Mycobacterium tuberculosis (strain CDC 1551 / Oshkosh)</name>
    <dbReference type="NCBI Taxonomy" id="83331"/>
    <lineage>
        <taxon>Bacteria</taxon>
        <taxon>Bacillati</taxon>
        <taxon>Actinomycetota</taxon>
        <taxon>Actinomycetes</taxon>
        <taxon>Mycobacteriales</taxon>
        <taxon>Mycobacteriaceae</taxon>
        <taxon>Mycobacterium</taxon>
        <taxon>Mycobacterium tuberculosis complex</taxon>
    </lineage>
</organism>
<evidence type="ECO:0000255" key="1">
    <source>
        <dbReference type="HAMAP-Rule" id="MF_01813"/>
    </source>
</evidence>
<evidence type="ECO:0000305" key="2"/>
<gene>
    <name evidence="1" type="primary">menG</name>
    <name type="synonym">menH</name>
    <name type="ordered locus">MT0584</name>
</gene>
<protein>
    <recommendedName>
        <fullName evidence="1">Demethylmenaquinone methyltransferase</fullName>
        <ecNumber evidence="1">2.1.1.163</ecNumber>
    </recommendedName>
</protein>